<name>MUTL_ALIF1</name>
<reference key="1">
    <citation type="journal article" date="2005" name="Proc. Natl. Acad. Sci. U.S.A.">
        <title>Complete genome sequence of Vibrio fischeri: a symbiotic bacterium with pathogenic congeners.</title>
        <authorList>
            <person name="Ruby E.G."/>
            <person name="Urbanowski M."/>
            <person name="Campbell J."/>
            <person name="Dunn A."/>
            <person name="Faini M."/>
            <person name="Gunsalus R."/>
            <person name="Lostroh P."/>
            <person name="Lupp C."/>
            <person name="McCann J."/>
            <person name="Millikan D."/>
            <person name="Schaefer A."/>
            <person name="Stabb E."/>
            <person name="Stevens A."/>
            <person name="Visick K."/>
            <person name="Whistler C."/>
            <person name="Greenberg E.P."/>
        </authorList>
    </citation>
    <scope>NUCLEOTIDE SEQUENCE [LARGE SCALE GENOMIC DNA]</scope>
    <source>
        <strain>ATCC 700601 / ES114</strain>
    </source>
</reference>
<sequence length="660" mass="74083">MPIQILPARLANQIAAGEVVERPASVVKELVENSIDAGATRIDIDIEKGGSKLIRIRDNGSGIPKDELTLALSRHATSKITSLDDLEAIVSLGFRGEALASISSVSRLTLTSRTVAQEEAWSAYAEGREMNVKLKPAAHPIGTTIDVVDLFFNTPARRKFLRADKTEFTHIDELLKRIALSRLDVTINLRHNGKMVRQYRAAQTKPQIEKRLAAVCGANFLQHALEVELEHGELKFHGWISSPEGARAQGDIQYCYVNGRMMKDKLINHAIRQGYESSLPANQYAAYILFIEINPHDVDVNVHPAKHEVRFHQARLVHDFIYQAIFGALQQGASLPDVVGHIQSEAEEQQLESKESYFPPMKEYVRQPQQTHYPKSEQLRAAVESTPSYPNKAPLDSWIPKGNVGSSSSNSTAPSRSFHTDKPTKKALSNYNELLTTQNREQRESTSQVNEQSHTFRSTQQIERVAPQVTQVSKNGITLGKVLSVVESTFALLQQGKQLQLLNLRYAEFVKIYGQLSSVNVEPLKPQPLLIPLSVGIDESICNNLSNYASLLKSLGIDLKVKNRTNIIVMAVCQPIRQQNLQQLIPNLLRYLEQINPSLEQVIKWLSHQIQHDEVSYTTAQAIQLVMELEQLWGDELNNFYPKLLKDIDITQVIQAFSHE</sequence>
<keyword id="KW-0227">DNA damage</keyword>
<keyword id="KW-0234">DNA repair</keyword>
<keyword id="KW-1185">Reference proteome</keyword>
<gene>
    <name evidence="1" type="primary">mutL</name>
    <name type="ordered locus">VF_2325</name>
</gene>
<protein>
    <recommendedName>
        <fullName evidence="1">DNA mismatch repair protein MutL</fullName>
    </recommendedName>
</protein>
<accession>Q5E2C6</accession>
<evidence type="ECO:0000255" key="1">
    <source>
        <dbReference type="HAMAP-Rule" id="MF_00149"/>
    </source>
</evidence>
<evidence type="ECO:0000256" key="2">
    <source>
        <dbReference type="SAM" id="MobiDB-lite"/>
    </source>
</evidence>
<comment type="function">
    <text evidence="1">This protein is involved in the repair of mismatches in DNA. It is required for dam-dependent methyl-directed DNA mismatch repair. May act as a 'molecular matchmaker', a protein that promotes the formation of a stable complex between two or more DNA-binding proteins in an ATP-dependent manner without itself being part of a final effector complex.</text>
</comment>
<comment type="similarity">
    <text evidence="1">Belongs to the DNA mismatch repair MutL/HexB family.</text>
</comment>
<organism>
    <name type="scientific">Aliivibrio fischeri (strain ATCC 700601 / ES114)</name>
    <name type="common">Vibrio fischeri</name>
    <dbReference type="NCBI Taxonomy" id="312309"/>
    <lineage>
        <taxon>Bacteria</taxon>
        <taxon>Pseudomonadati</taxon>
        <taxon>Pseudomonadota</taxon>
        <taxon>Gammaproteobacteria</taxon>
        <taxon>Vibrionales</taxon>
        <taxon>Vibrionaceae</taxon>
        <taxon>Aliivibrio</taxon>
    </lineage>
</organism>
<proteinExistence type="inferred from homology"/>
<dbReference type="EMBL" id="CP000020">
    <property type="protein sequence ID" value="AAW86820.1"/>
    <property type="molecule type" value="Genomic_DNA"/>
</dbReference>
<dbReference type="RefSeq" id="WP_011262727.1">
    <property type="nucleotide sequence ID" value="NC_006840.2"/>
</dbReference>
<dbReference type="RefSeq" id="YP_205708.1">
    <property type="nucleotide sequence ID" value="NC_006840.2"/>
</dbReference>
<dbReference type="SMR" id="Q5E2C6"/>
<dbReference type="STRING" id="312309.VF_2325"/>
<dbReference type="EnsemblBacteria" id="AAW86820">
    <property type="protein sequence ID" value="AAW86820"/>
    <property type="gene ID" value="VF_2325"/>
</dbReference>
<dbReference type="GeneID" id="54165041"/>
<dbReference type="KEGG" id="vfi:VF_2325"/>
<dbReference type="PATRIC" id="fig|312309.11.peg.2364"/>
<dbReference type="eggNOG" id="COG0323">
    <property type="taxonomic scope" value="Bacteria"/>
</dbReference>
<dbReference type="HOGENOM" id="CLU_004131_5_1_6"/>
<dbReference type="OrthoDB" id="9763467at2"/>
<dbReference type="Proteomes" id="UP000000537">
    <property type="component" value="Chromosome I"/>
</dbReference>
<dbReference type="GO" id="GO:0032300">
    <property type="term" value="C:mismatch repair complex"/>
    <property type="evidence" value="ECO:0007669"/>
    <property type="project" value="InterPro"/>
</dbReference>
<dbReference type="GO" id="GO:0005524">
    <property type="term" value="F:ATP binding"/>
    <property type="evidence" value="ECO:0007669"/>
    <property type="project" value="InterPro"/>
</dbReference>
<dbReference type="GO" id="GO:0016887">
    <property type="term" value="F:ATP hydrolysis activity"/>
    <property type="evidence" value="ECO:0007669"/>
    <property type="project" value="InterPro"/>
</dbReference>
<dbReference type="GO" id="GO:0140664">
    <property type="term" value="F:ATP-dependent DNA damage sensor activity"/>
    <property type="evidence" value="ECO:0007669"/>
    <property type="project" value="InterPro"/>
</dbReference>
<dbReference type="GO" id="GO:0030983">
    <property type="term" value="F:mismatched DNA binding"/>
    <property type="evidence" value="ECO:0007669"/>
    <property type="project" value="InterPro"/>
</dbReference>
<dbReference type="GO" id="GO:0006298">
    <property type="term" value="P:mismatch repair"/>
    <property type="evidence" value="ECO:0007669"/>
    <property type="project" value="UniProtKB-UniRule"/>
</dbReference>
<dbReference type="CDD" id="cd16926">
    <property type="entry name" value="HATPase_MutL-MLH-PMS-like"/>
    <property type="match status" value="1"/>
</dbReference>
<dbReference type="CDD" id="cd03482">
    <property type="entry name" value="MutL_Trans_MutL"/>
    <property type="match status" value="1"/>
</dbReference>
<dbReference type="FunFam" id="3.30.230.10:FF:000013">
    <property type="entry name" value="DNA mismatch repair endonuclease MutL"/>
    <property type="match status" value="1"/>
</dbReference>
<dbReference type="FunFam" id="3.30.565.10:FF:000003">
    <property type="entry name" value="DNA mismatch repair endonuclease MutL"/>
    <property type="match status" value="1"/>
</dbReference>
<dbReference type="Gene3D" id="3.30.230.10">
    <property type="match status" value="1"/>
</dbReference>
<dbReference type="Gene3D" id="3.30.565.10">
    <property type="entry name" value="Histidine kinase-like ATPase, C-terminal domain"/>
    <property type="match status" value="1"/>
</dbReference>
<dbReference type="Gene3D" id="3.30.1540.20">
    <property type="entry name" value="MutL, C-terminal domain, dimerisation subdomain"/>
    <property type="match status" value="1"/>
</dbReference>
<dbReference type="Gene3D" id="3.30.1370.100">
    <property type="entry name" value="MutL, C-terminal domain, regulatory subdomain"/>
    <property type="match status" value="1"/>
</dbReference>
<dbReference type="HAMAP" id="MF_00149">
    <property type="entry name" value="DNA_mis_repair"/>
    <property type="match status" value="1"/>
</dbReference>
<dbReference type="InterPro" id="IPR014762">
    <property type="entry name" value="DNA_mismatch_repair_CS"/>
</dbReference>
<dbReference type="InterPro" id="IPR020667">
    <property type="entry name" value="DNA_mismatch_repair_MutL"/>
</dbReference>
<dbReference type="InterPro" id="IPR013507">
    <property type="entry name" value="DNA_mismatch_S5_2-like"/>
</dbReference>
<dbReference type="InterPro" id="IPR036890">
    <property type="entry name" value="HATPase_C_sf"/>
</dbReference>
<dbReference type="InterPro" id="IPR002099">
    <property type="entry name" value="MutL/Mlh/PMS"/>
</dbReference>
<dbReference type="InterPro" id="IPR038973">
    <property type="entry name" value="MutL/Mlh/Pms-like"/>
</dbReference>
<dbReference type="InterPro" id="IPR014790">
    <property type="entry name" value="MutL_C"/>
</dbReference>
<dbReference type="InterPro" id="IPR042120">
    <property type="entry name" value="MutL_C_dimsub"/>
</dbReference>
<dbReference type="InterPro" id="IPR042121">
    <property type="entry name" value="MutL_C_regsub"/>
</dbReference>
<dbReference type="InterPro" id="IPR037198">
    <property type="entry name" value="MutL_C_sf"/>
</dbReference>
<dbReference type="InterPro" id="IPR020568">
    <property type="entry name" value="Ribosomal_Su5_D2-typ_SF"/>
</dbReference>
<dbReference type="InterPro" id="IPR014721">
    <property type="entry name" value="Ribsml_uS5_D2-typ_fold_subgr"/>
</dbReference>
<dbReference type="NCBIfam" id="TIGR00585">
    <property type="entry name" value="mutl"/>
    <property type="match status" value="1"/>
</dbReference>
<dbReference type="NCBIfam" id="NF000948">
    <property type="entry name" value="PRK00095.1-1"/>
    <property type="match status" value="1"/>
</dbReference>
<dbReference type="PANTHER" id="PTHR10073">
    <property type="entry name" value="DNA MISMATCH REPAIR PROTEIN MLH, PMS, MUTL"/>
    <property type="match status" value="1"/>
</dbReference>
<dbReference type="PANTHER" id="PTHR10073:SF12">
    <property type="entry name" value="DNA MISMATCH REPAIR PROTEIN MLH1"/>
    <property type="match status" value="1"/>
</dbReference>
<dbReference type="Pfam" id="PF01119">
    <property type="entry name" value="DNA_mis_repair"/>
    <property type="match status" value="1"/>
</dbReference>
<dbReference type="Pfam" id="PF13589">
    <property type="entry name" value="HATPase_c_3"/>
    <property type="match status" value="1"/>
</dbReference>
<dbReference type="Pfam" id="PF08676">
    <property type="entry name" value="MutL_C"/>
    <property type="match status" value="1"/>
</dbReference>
<dbReference type="SMART" id="SM01340">
    <property type="entry name" value="DNA_mis_repair"/>
    <property type="match status" value="1"/>
</dbReference>
<dbReference type="SMART" id="SM00853">
    <property type="entry name" value="MutL_C"/>
    <property type="match status" value="1"/>
</dbReference>
<dbReference type="SUPFAM" id="SSF55874">
    <property type="entry name" value="ATPase domain of HSP90 chaperone/DNA topoisomerase II/histidine kinase"/>
    <property type="match status" value="1"/>
</dbReference>
<dbReference type="SUPFAM" id="SSF118116">
    <property type="entry name" value="DNA mismatch repair protein MutL"/>
    <property type="match status" value="1"/>
</dbReference>
<dbReference type="SUPFAM" id="SSF54211">
    <property type="entry name" value="Ribosomal protein S5 domain 2-like"/>
    <property type="match status" value="1"/>
</dbReference>
<dbReference type="PROSITE" id="PS00058">
    <property type="entry name" value="DNA_MISMATCH_REPAIR_1"/>
    <property type="match status" value="1"/>
</dbReference>
<feature type="chain" id="PRO_0000177990" description="DNA mismatch repair protein MutL">
    <location>
        <begin position="1"/>
        <end position="660"/>
    </location>
</feature>
<feature type="region of interest" description="Disordered" evidence="2">
    <location>
        <begin position="368"/>
        <end position="426"/>
    </location>
</feature>
<feature type="region of interest" description="Disordered" evidence="2">
    <location>
        <begin position="439"/>
        <end position="461"/>
    </location>
</feature>
<feature type="compositionally biased region" description="Low complexity" evidence="2">
    <location>
        <begin position="406"/>
        <end position="417"/>
    </location>
</feature>